<sequence length="26" mass="3042">GIKDYLKKLLQKAINKIKSLRKKQDA</sequence>
<comment type="function">
    <text evidence="3">May have cytolytic and antimicrobial activity.</text>
</comment>
<comment type="subcellular location">
    <subcellularLocation>
        <location evidence="1">Secreted</location>
    </subcellularLocation>
</comment>
<comment type="tissue specificity">
    <text evidence="4">Expressed by the venom gland.</text>
</comment>
<comment type="mass spectrometry" mass="3039.9" error="0.5" method="MALDI" evidence="1">
    <text>Monoisotopic mass.</text>
</comment>
<organism>
    <name type="scientific">Oxyopes takobius</name>
    <name type="common">Lynx spider</name>
    <name type="synonym">Oxyopes foliiformis</name>
    <dbReference type="NCBI Taxonomy" id="666126"/>
    <lineage>
        <taxon>Eukaryota</taxon>
        <taxon>Metazoa</taxon>
        <taxon>Ecdysozoa</taxon>
        <taxon>Arthropoda</taxon>
        <taxon>Chelicerata</taxon>
        <taxon>Arachnida</taxon>
        <taxon>Araneae</taxon>
        <taxon>Araneomorphae</taxon>
        <taxon>Entelegynae</taxon>
        <taxon>Lycosoidea</taxon>
        <taxon>Oxyopidae</taxon>
        <taxon>Oxyopes</taxon>
    </lineage>
</organism>
<evidence type="ECO:0000269" key="1">
    <source ref="1"/>
</evidence>
<evidence type="ECO:0000303" key="2">
    <source ref="1"/>
</evidence>
<evidence type="ECO:0000305" key="3"/>
<evidence type="ECO:0000305" key="4">
    <source ref="1"/>
</evidence>
<name>TOP3A_OXYTA</name>
<feature type="chain" id="PRO_0000446058" description="Oxyopinin-3a">
    <location>
        <begin position="1"/>
        <end position="26"/>
    </location>
</feature>
<dbReference type="GO" id="GO:0005576">
    <property type="term" value="C:extracellular region"/>
    <property type="evidence" value="ECO:0007669"/>
    <property type="project" value="UniProtKB-SubCell"/>
</dbReference>
<dbReference type="GO" id="GO:0090729">
    <property type="term" value="F:toxin activity"/>
    <property type="evidence" value="ECO:0007669"/>
    <property type="project" value="UniProtKB-KW"/>
</dbReference>
<dbReference type="GO" id="GO:0031640">
    <property type="term" value="P:killing of cells of another organism"/>
    <property type="evidence" value="ECO:0007669"/>
    <property type="project" value="UniProtKB-KW"/>
</dbReference>
<accession>C0HLF9</accession>
<protein>
    <recommendedName>
        <fullName evidence="2">Oxyopinin-3a</fullName>
        <shortName evidence="2">Oxt-3a</shortName>
    </recommendedName>
</protein>
<reference evidence="3" key="1">
    <citation type="submission" date="2018-10" db="UniProtKB">
        <authorList>
            <person name="Vassilevski A."/>
            <person name="Kozlov S."/>
            <person name="Grishin E."/>
        </authorList>
    </citation>
    <scope>PROTEIN SEQUENCE</scope>
    <scope>SUBCELLULAR LOCATION</scope>
    <scope>MASS SPECTROMETRY</scope>
</reference>
<proteinExistence type="evidence at protein level"/>
<keyword id="KW-0929">Antimicrobial</keyword>
<keyword id="KW-0204">Cytolysis</keyword>
<keyword id="KW-0903">Direct protein sequencing</keyword>
<keyword id="KW-0964">Secreted</keyword>
<keyword id="KW-0800">Toxin</keyword>